<proteinExistence type="inferred from homology"/>
<gene>
    <name evidence="1" type="primary">aceK</name>
    <name type="ordered locus">ECSE_4301</name>
</gene>
<name>ACEK_ECOSE</name>
<feature type="chain" id="PRO_1000133269" description="Isocitrate dehydrogenase kinase/phosphatase">
    <location>
        <begin position="1"/>
        <end position="578"/>
    </location>
</feature>
<feature type="active site" evidence="1">
    <location>
        <position position="371"/>
    </location>
</feature>
<feature type="binding site" evidence="1">
    <location>
        <begin position="315"/>
        <end position="321"/>
    </location>
    <ligand>
        <name>ATP</name>
        <dbReference type="ChEBI" id="CHEBI:30616"/>
    </ligand>
</feature>
<feature type="binding site" evidence="1">
    <location>
        <position position="336"/>
    </location>
    <ligand>
        <name>ATP</name>
        <dbReference type="ChEBI" id="CHEBI:30616"/>
    </ligand>
</feature>
<sequence length="578" mass="67671">MPRGLELLIAQTILQGFDAQYGRFLEVTSGAQQRFEQADWHAVQQAMKNRIHLYDHHVGLVVEQLRCITNGQSTDAAFLLRVKEHYTRLLPDYPRFEIAESFFNSVYCRLFDHRSLTPERLFIFSSQPERRFRTIPRPLAKDFHPDHGWESLLMRVISDLPLRLRWQNKSRDIHYIIRHLTETLGTDNLAESHLQVANELFYRNKAAWLVGKLITPSGTLPFLLPIHQTDDGELFIDTCLTTTAEASIVFGFARSYFMVYAPLPAALVEWLREILPGKTTAELYMAIGCQKHAKTESYREYLVYLQGCNEQFIEAPGIRGMVMLVFTLPGFDRVFKVIKDKFAPQKEMSAAHVRACYQLVKEHDRVGRMADTQEFENFVLEKRHISPALMELLLQEAAEKITDLGEQIVIRHLYIERRMVPLNIWLEQVEGQQLRDAIEEYGNAIRQLAAANIFPGDMLFKNFGVTRHGRVVFYDYDEICYMTEVNFRDIPPPRYPEDELASEPWYSVSPGDVFPEEFRHWLCADPRIGPLFEEMHADLFRADYWRALQNRIREGHVEDVYAYRRRQRFSVRYGEMLF</sequence>
<reference key="1">
    <citation type="journal article" date="2008" name="DNA Res.">
        <title>Complete genome sequence and comparative analysis of the wild-type commensal Escherichia coli strain SE11 isolated from a healthy adult.</title>
        <authorList>
            <person name="Oshima K."/>
            <person name="Toh H."/>
            <person name="Ogura Y."/>
            <person name="Sasamoto H."/>
            <person name="Morita H."/>
            <person name="Park S.-H."/>
            <person name="Ooka T."/>
            <person name="Iyoda S."/>
            <person name="Taylor T.D."/>
            <person name="Hayashi T."/>
            <person name="Itoh K."/>
            <person name="Hattori M."/>
        </authorList>
    </citation>
    <scope>NUCLEOTIDE SEQUENCE [LARGE SCALE GENOMIC DNA]</scope>
    <source>
        <strain>SE11</strain>
    </source>
</reference>
<organism>
    <name type="scientific">Escherichia coli (strain SE11)</name>
    <dbReference type="NCBI Taxonomy" id="409438"/>
    <lineage>
        <taxon>Bacteria</taxon>
        <taxon>Pseudomonadati</taxon>
        <taxon>Pseudomonadota</taxon>
        <taxon>Gammaproteobacteria</taxon>
        <taxon>Enterobacterales</taxon>
        <taxon>Enterobacteriaceae</taxon>
        <taxon>Escherichia</taxon>
    </lineage>
</organism>
<evidence type="ECO:0000255" key="1">
    <source>
        <dbReference type="HAMAP-Rule" id="MF_00747"/>
    </source>
</evidence>
<comment type="function">
    <text evidence="1">Bifunctional enzyme which can phosphorylate or dephosphorylate isocitrate dehydrogenase (IDH) on a specific serine residue. This is a regulatory mechanism which enables bacteria to bypass the Krebs cycle via the glyoxylate shunt in response to the source of carbon. When bacteria are grown on glucose, IDH is fully active and unphosphorylated, but when grown on acetate or ethanol, the activity of IDH declines drastically concomitant with its phosphorylation.</text>
</comment>
<comment type="catalytic activity">
    <reaction evidence="1">
        <text>L-seryl-[isocitrate dehydrogenase] + ATP = O-phospho-L-seryl-[isocitrate dehydrogenase] + ADP + H(+)</text>
        <dbReference type="Rhea" id="RHEA:43540"/>
        <dbReference type="Rhea" id="RHEA-COMP:10605"/>
        <dbReference type="Rhea" id="RHEA-COMP:10606"/>
        <dbReference type="ChEBI" id="CHEBI:15378"/>
        <dbReference type="ChEBI" id="CHEBI:29999"/>
        <dbReference type="ChEBI" id="CHEBI:30616"/>
        <dbReference type="ChEBI" id="CHEBI:83421"/>
        <dbReference type="ChEBI" id="CHEBI:456216"/>
        <dbReference type="EC" id="2.7.11.5"/>
    </reaction>
</comment>
<comment type="subcellular location">
    <subcellularLocation>
        <location evidence="1">Cytoplasm</location>
    </subcellularLocation>
</comment>
<comment type="similarity">
    <text evidence="1">Belongs to the AceK family.</text>
</comment>
<accession>B6I5M4</accession>
<protein>
    <recommendedName>
        <fullName evidence="1">Isocitrate dehydrogenase kinase/phosphatase</fullName>
        <shortName evidence="1">IDH kinase/phosphatase</shortName>
        <shortName evidence="1">IDHK/P</shortName>
        <ecNumber evidence="1">2.7.11.5</ecNumber>
        <ecNumber evidence="1">3.1.3.-</ecNumber>
    </recommendedName>
</protein>
<dbReference type="EC" id="2.7.11.5" evidence="1"/>
<dbReference type="EC" id="3.1.3.-" evidence="1"/>
<dbReference type="EMBL" id="AP009240">
    <property type="protein sequence ID" value="BAG79825.1"/>
    <property type="molecule type" value="Genomic_DNA"/>
</dbReference>
<dbReference type="RefSeq" id="WP_001137214.1">
    <property type="nucleotide sequence ID" value="NC_011415.1"/>
</dbReference>
<dbReference type="SMR" id="B6I5M4"/>
<dbReference type="GeneID" id="75204156"/>
<dbReference type="KEGG" id="ecy:ECSE_4301"/>
<dbReference type="HOGENOM" id="CLU_033804_1_1_6"/>
<dbReference type="Proteomes" id="UP000008199">
    <property type="component" value="Chromosome"/>
</dbReference>
<dbReference type="GO" id="GO:0005737">
    <property type="term" value="C:cytoplasm"/>
    <property type="evidence" value="ECO:0007669"/>
    <property type="project" value="UniProtKB-SubCell"/>
</dbReference>
<dbReference type="GO" id="GO:0008772">
    <property type="term" value="F:[isocitrate dehydrogenase (NADP+)] kinase activity"/>
    <property type="evidence" value="ECO:0007669"/>
    <property type="project" value="UniProtKB-UniRule"/>
</dbReference>
<dbReference type="GO" id="GO:0016208">
    <property type="term" value="F:AMP binding"/>
    <property type="evidence" value="ECO:0007669"/>
    <property type="project" value="TreeGrafter"/>
</dbReference>
<dbReference type="GO" id="GO:0005524">
    <property type="term" value="F:ATP binding"/>
    <property type="evidence" value="ECO:0007669"/>
    <property type="project" value="UniProtKB-UniRule"/>
</dbReference>
<dbReference type="GO" id="GO:0004721">
    <property type="term" value="F:phosphoprotein phosphatase activity"/>
    <property type="evidence" value="ECO:0007669"/>
    <property type="project" value="UniProtKB-KW"/>
</dbReference>
<dbReference type="GO" id="GO:0004674">
    <property type="term" value="F:protein serine/threonine kinase activity"/>
    <property type="evidence" value="ECO:0007669"/>
    <property type="project" value="UniProtKB-KW"/>
</dbReference>
<dbReference type="GO" id="GO:0006006">
    <property type="term" value="P:glucose metabolic process"/>
    <property type="evidence" value="ECO:0007669"/>
    <property type="project" value="InterPro"/>
</dbReference>
<dbReference type="GO" id="GO:0006097">
    <property type="term" value="P:glyoxylate cycle"/>
    <property type="evidence" value="ECO:0007669"/>
    <property type="project" value="UniProtKB-UniRule"/>
</dbReference>
<dbReference type="GO" id="GO:0006099">
    <property type="term" value="P:tricarboxylic acid cycle"/>
    <property type="evidence" value="ECO:0007669"/>
    <property type="project" value="UniProtKB-UniRule"/>
</dbReference>
<dbReference type="HAMAP" id="MF_00747">
    <property type="entry name" value="AceK"/>
    <property type="match status" value="1"/>
</dbReference>
<dbReference type="InterPro" id="IPR046855">
    <property type="entry name" value="AceK_kinase"/>
</dbReference>
<dbReference type="InterPro" id="IPR046854">
    <property type="entry name" value="AceK_regulatory"/>
</dbReference>
<dbReference type="InterPro" id="IPR010452">
    <property type="entry name" value="Isocitrate_DH_AceK"/>
</dbReference>
<dbReference type="NCBIfam" id="NF002804">
    <property type="entry name" value="PRK02946.1"/>
    <property type="match status" value="1"/>
</dbReference>
<dbReference type="PANTHER" id="PTHR39559">
    <property type="match status" value="1"/>
</dbReference>
<dbReference type="PANTHER" id="PTHR39559:SF1">
    <property type="entry name" value="ISOCITRATE DEHYDROGENASE KINASE_PHOSPHATASE"/>
    <property type="match status" value="1"/>
</dbReference>
<dbReference type="Pfam" id="PF06315">
    <property type="entry name" value="AceK_kinase"/>
    <property type="match status" value="1"/>
</dbReference>
<dbReference type="Pfam" id="PF20423">
    <property type="entry name" value="AceK_regulatory"/>
    <property type="match status" value="1"/>
</dbReference>
<dbReference type="PIRSF" id="PIRSF000719">
    <property type="entry name" value="AceK"/>
    <property type="match status" value="1"/>
</dbReference>
<keyword id="KW-0067">ATP-binding</keyword>
<keyword id="KW-0963">Cytoplasm</keyword>
<keyword id="KW-0329">Glyoxylate bypass</keyword>
<keyword id="KW-0378">Hydrolase</keyword>
<keyword id="KW-0418">Kinase</keyword>
<keyword id="KW-0547">Nucleotide-binding</keyword>
<keyword id="KW-0904">Protein phosphatase</keyword>
<keyword id="KW-0723">Serine/threonine-protein kinase</keyword>
<keyword id="KW-0808">Transferase</keyword>
<keyword id="KW-0816">Tricarboxylic acid cycle</keyword>